<dbReference type="EC" id="4.1.1.121" evidence="2"/>
<dbReference type="EMBL" id="CP000629">
    <property type="protein sequence ID" value="ACM30315.1"/>
    <property type="molecule type" value="Genomic_DNA"/>
</dbReference>
<dbReference type="RefSeq" id="WP_015917643.1">
    <property type="nucleotide sequence ID" value="NC_011983.1"/>
</dbReference>
<dbReference type="SMR" id="B9JK73"/>
<dbReference type="STRING" id="311403.Arad_9230"/>
<dbReference type="GeneID" id="86852236"/>
<dbReference type="KEGG" id="ara:Arad_9230"/>
<dbReference type="eggNOG" id="COG1850">
    <property type="taxonomic scope" value="Bacteria"/>
</dbReference>
<dbReference type="HOGENOM" id="CLU_031450_3_0_5"/>
<dbReference type="BioCyc" id="MetaCyc:MONOMER-20966"/>
<dbReference type="BRENDA" id="4.1.1.121">
    <property type="organism ID" value="200"/>
</dbReference>
<dbReference type="Proteomes" id="UP000001600">
    <property type="component" value="Chromosome 2"/>
</dbReference>
<dbReference type="GO" id="GO:0000287">
    <property type="term" value="F:magnesium ion binding"/>
    <property type="evidence" value="ECO:0007669"/>
    <property type="project" value="InterPro"/>
</dbReference>
<dbReference type="GO" id="GO:0016984">
    <property type="term" value="F:ribulose-bisphosphate carboxylase activity"/>
    <property type="evidence" value="ECO:0007669"/>
    <property type="project" value="InterPro"/>
</dbReference>
<dbReference type="GO" id="GO:0015977">
    <property type="term" value="P:carbon fixation"/>
    <property type="evidence" value="ECO:0007669"/>
    <property type="project" value="InterPro"/>
</dbReference>
<dbReference type="CDD" id="cd08207">
    <property type="entry name" value="RLP_NonPhot"/>
    <property type="match status" value="1"/>
</dbReference>
<dbReference type="Gene3D" id="3.20.20.110">
    <property type="entry name" value="Ribulose bisphosphate carboxylase, large subunit, C-terminal domain"/>
    <property type="match status" value="1"/>
</dbReference>
<dbReference type="Gene3D" id="3.30.70.150">
    <property type="entry name" value="RuBisCO large subunit, N-terminal domain"/>
    <property type="match status" value="1"/>
</dbReference>
<dbReference type="InterPro" id="IPR050030">
    <property type="entry name" value="OiaX"/>
</dbReference>
<dbReference type="InterPro" id="IPR033966">
    <property type="entry name" value="RuBisCO"/>
</dbReference>
<dbReference type="InterPro" id="IPR020878">
    <property type="entry name" value="RuBisCo_large_chain_AS"/>
</dbReference>
<dbReference type="InterPro" id="IPR000685">
    <property type="entry name" value="RuBisCO_lsu_C"/>
</dbReference>
<dbReference type="InterPro" id="IPR036376">
    <property type="entry name" value="RuBisCO_lsu_C_sf"/>
</dbReference>
<dbReference type="InterPro" id="IPR017443">
    <property type="entry name" value="RuBisCO_lsu_fd_N"/>
</dbReference>
<dbReference type="InterPro" id="IPR036422">
    <property type="entry name" value="RuBisCO_lsu_N_sf"/>
</dbReference>
<dbReference type="NCBIfam" id="NF042437">
    <property type="entry name" value="OxoIsoapPDcar_OiaX"/>
    <property type="match status" value="1"/>
</dbReference>
<dbReference type="PANTHER" id="PTHR42704">
    <property type="entry name" value="RIBULOSE BISPHOSPHATE CARBOXYLASE"/>
    <property type="match status" value="1"/>
</dbReference>
<dbReference type="PANTHER" id="PTHR42704:SF17">
    <property type="entry name" value="RIBULOSE BISPHOSPHATE CARBOXYLASE LARGE CHAIN"/>
    <property type="match status" value="1"/>
</dbReference>
<dbReference type="Pfam" id="PF00016">
    <property type="entry name" value="RuBisCO_large"/>
    <property type="match status" value="1"/>
</dbReference>
<dbReference type="Pfam" id="PF02788">
    <property type="entry name" value="RuBisCO_large_N"/>
    <property type="match status" value="1"/>
</dbReference>
<dbReference type="SFLD" id="SFLDS00014">
    <property type="entry name" value="RuBisCO"/>
    <property type="match status" value="1"/>
</dbReference>
<dbReference type="SFLD" id="SFLDG00301">
    <property type="entry name" value="RuBisCO-like_proteins"/>
    <property type="match status" value="1"/>
</dbReference>
<dbReference type="SUPFAM" id="SSF51649">
    <property type="entry name" value="RuBisCo, C-terminal domain"/>
    <property type="match status" value="1"/>
</dbReference>
<dbReference type="SUPFAM" id="SSF54966">
    <property type="entry name" value="RuBisCO, large subunit, small (N-terminal) domain"/>
    <property type="match status" value="1"/>
</dbReference>
<dbReference type="PROSITE" id="PS00157">
    <property type="entry name" value="RUBISCO_LARGE"/>
    <property type="match status" value="1"/>
</dbReference>
<name>OIAX_RHIR8</name>
<reference key="1">
    <citation type="journal article" date="2009" name="J. Bacteriol.">
        <title>Genome sequences of three Agrobacterium biovars help elucidate the evolution of multichromosome genomes in bacteria.</title>
        <authorList>
            <person name="Slater S.C."/>
            <person name="Goldman B.S."/>
            <person name="Goodner B."/>
            <person name="Setubal J.C."/>
            <person name="Farrand S.K."/>
            <person name="Nester E.W."/>
            <person name="Burr T.J."/>
            <person name="Banta L."/>
            <person name="Dickerman A.W."/>
            <person name="Paulsen I."/>
            <person name="Otten L."/>
            <person name="Suen G."/>
            <person name="Welch R."/>
            <person name="Almeida N.F."/>
            <person name="Arnold F."/>
            <person name="Burton O.T."/>
            <person name="Du Z."/>
            <person name="Ewing A."/>
            <person name="Godsy E."/>
            <person name="Heisel S."/>
            <person name="Houmiel K.L."/>
            <person name="Jhaveri J."/>
            <person name="Lu J."/>
            <person name="Miller N.M."/>
            <person name="Norton S."/>
            <person name="Chen Q."/>
            <person name="Phoolcharoen W."/>
            <person name="Ohlin V."/>
            <person name="Ondrusek D."/>
            <person name="Pride N."/>
            <person name="Stricklin S.L."/>
            <person name="Sun J."/>
            <person name="Wheeler C."/>
            <person name="Wilson L."/>
            <person name="Zhu H."/>
            <person name="Wood D.W."/>
        </authorList>
    </citation>
    <scope>NUCLEOTIDE SEQUENCE [LARGE SCALE GENOMIC DNA]</scope>
    <source>
        <strain>K84 / ATCC BAA-868</strain>
    </source>
</reference>
<reference key="2">
    <citation type="journal article" date="2018" name="Nat. Chem. Biol.">
        <title>Functional assignment of multiple catabolic pathways for D-apiose.</title>
        <authorList>
            <person name="Carter M.S."/>
            <person name="Zhang X."/>
            <person name="Huang H."/>
            <person name="Bouvier J.T."/>
            <person name="Francisco B.S."/>
            <person name="Vetting M.W."/>
            <person name="Al-Obaidi N."/>
            <person name="Bonanno J.B."/>
            <person name="Ghosh A."/>
            <person name="Zallot R.G."/>
            <person name="Andersen H.M."/>
            <person name="Almo S.C."/>
            <person name="Gerlt J.A."/>
        </authorList>
    </citation>
    <scope>FUNCTION</scope>
    <scope>CATALYTIC ACTIVITY</scope>
    <scope>PATHWAY</scope>
</reference>
<evidence type="ECO:0000250" key="1">
    <source>
        <dbReference type="UniProtKB" id="O93627"/>
    </source>
</evidence>
<evidence type="ECO:0000269" key="2">
    <source>
    </source>
</evidence>
<evidence type="ECO:0000303" key="3">
    <source>
    </source>
</evidence>
<evidence type="ECO:0000305" key="4"/>
<evidence type="ECO:0000312" key="5">
    <source>
        <dbReference type="EMBL" id="ACM30315.1"/>
    </source>
</evidence>
<protein>
    <recommendedName>
        <fullName evidence="3">3-oxo-isoapionate-4-phosphate decarboxylase</fullName>
        <ecNumber evidence="2">4.1.1.121</ecNumber>
    </recommendedName>
</protein>
<keyword id="KW-0119">Carbohydrate metabolism</keyword>
<keyword id="KW-0210">Decarboxylase</keyword>
<keyword id="KW-0456">Lyase</keyword>
<keyword id="KW-0460">Magnesium</keyword>
<keyword id="KW-0479">Metal-binding</keyword>
<organism>
    <name type="scientific">Rhizobium rhizogenes (strain K84 / ATCC BAA-868)</name>
    <name type="common">Agrobacterium radiobacter</name>
    <dbReference type="NCBI Taxonomy" id="311403"/>
    <lineage>
        <taxon>Bacteria</taxon>
        <taxon>Pseudomonadati</taxon>
        <taxon>Pseudomonadota</taxon>
        <taxon>Alphaproteobacteria</taxon>
        <taxon>Hyphomicrobiales</taxon>
        <taxon>Rhizobiaceae</taxon>
        <taxon>Rhizobium/Agrobacterium group</taxon>
        <taxon>Rhizobium</taxon>
    </lineage>
</organism>
<feature type="chain" id="PRO_0000446043" description="3-oxo-isoapionate-4-phosphate decarboxylase">
    <location>
        <begin position="1"/>
        <end position="419"/>
    </location>
</feature>
<feature type="binding site" description="via carbamate group" evidence="1">
    <location>
        <position position="179"/>
    </location>
    <ligand>
        <name>Mg(2+)</name>
        <dbReference type="ChEBI" id="CHEBI:18420"/>
    </ligand>
</feature>
<feature type="binding site" evidence="1">
    <location>
        <position position="181"/>
    </location>
    <ligand>
        <name>Mg(2+)</name>
        <dbReference type="ChEBI" id="CHEBI:18420"/>
    </ligand>
</feature>
<feature type="binding site" evidence="1">
    <location>
        <position position="182"/>
    </location>
    <ligand>
        <name>Mg(2+)</name>
        <dbReference type="ChEBI" id="CHEBI:18420"/>
    </ligand>
</feature>
<feature type="modified residue" description="N6-carboxylysine" evidence="1">
    <location>
        <position position="179"/>
    </location>
</feature>
<sequence length="419" mass="45085">MSITITYRIETPGSIEAMADKIASDQSTGTFVPVPGETEELKSRVAARVLGIRQLEDAKRPTWPEVAEGHGPLRRADVDIAFPLDAIGTDLSALMTIAIGGVFSIKGMTGIRIVDMKLPNAFRGAHPGPQFGVAGSKRLTGVEGRPIIGTIVKPALGLRPVETAELVGELINSGVDFIKDDEKLMSPAYSPLKERVAAIMPRILDHEQKTGKKVMYAFGISHADPDEMMRNHDLVLEAGGNCAVVNINSIGFGGMSFLRKRSGLVLHAHRNGWDVLTRDPGAGMDFKVYQQFWRLLGVDQFQINGIRVKYWEPDESFIESFKAVSTPLFDPSDCPLPVAGSGQWGGQAPETYQRTGRTTDLLYLCGGGIVSHPSGPAAGVRAVQQAWEAAVADIPLANYAKDHPELAASIAKFSDGKGA</sequence>
<gene>
    <name evidence="3" type="primary">oiaX</name>
    <name evidence="5" type="ordered locus">Arad_9230</name>
</gene>
<proteinExistence type="evidence at protein level"/>
<accession>B9JK73</accession>
<comment type="function">
    <text evidence="2">Involved in catabolism of D-apiose. Catalyzes the decarboxylation of 3-oxo-isoapionate 4-phosphate to L-erythrulose 1-phosphate.</text>
</comment>
<comment type="catalytic activity">
    <reaction evidence="2">
        <text>3-oxoisoapionate 4-phosphate + H(+) = L-erythrulose 1-phosphate + CO2</text>
        <dbReference type="Rhea" id="RHEA:57072"/>
        <dbReference type="ChEBI" id="CHEBI:15378"/>
        <dbReference type="ChEBI" id="CHEBI:16526"/>
        <dbReference type="ChEBI" id="CHEBI:58002"/>
        <dbReference type="ChEBI" id="CHEBI:141357"/>
        <dbReference type="EC" id="4.1.1.121"/>
    </reaction>
</comment>
<comment type="cofactor">
    <cofactor evidence="1">
        <name>Mg(2+)</name>
        <dbReference type="ChEBI" id="CHEBI:18420"/>
    </cofactor>
</comment>
<comment type="pathway">
    <text evidence="2">Carbohydrate metabolism.</text>
</comment>
<comment type="similarity">
    <text evidence="4">Belongs to the RuBisCO large chain family.</text>
</comment>